<dbReference type="PIR" id="S02078">
    <property type="entry name" value="HATX"/>
</dbReference>
<dbReference type="SMR" id="P10883"/>
<dbReference type="GO" id="GO:0072562">
    <property type="term" value="C:blood microparticle"/>
    <property type="evidence" value="ECO:0007669"/>
    <property type="project" value="TreeGrafter"/>
</dbReference>
<dbReference type="GO" id="GO:0031838">
    <property type="term" value="C:haptoglobin-hemoglobin complex"/>
    <property type="evidence" value="ECO:0007669"/>
    <property type="project" value="TreeGrafter"/>
</dbReference>
<dbReference type="GO" id="GO:0005833">
    <property type="term" value="C:hemoglobin complex"/>
    <property type="evidence" value="ECO:0007669"/>
    <property type="project" value="InterPro"/>
</dbReference>
<dbReference type="GO" id="GO:0031720">
    <property type="term" value="F:haptoglobin binding"/>
    <property type="evidence" value="ECO:0007669"/>
    <property type="project" value="TreeGrafter"/>
</dbReference>
<dbReference type="GO" id="GO:0020037">
    <property type="term" value="F:heme binding"/>
    <property type="evidence" value="ECO:0007669"/>
    <property type="project" value="InterPro"/>
</dbReference>
<dbReference type="GO" id="GO:0046872">
    <property type="term" value="F:metal ion binding"/>
    <property type="evidence" value="ECO:0007669"/>
    <property type="project" value="UniProtKB-KW"/>
</dbReference>
<dbReference type="GO" id="GO:0043177">
    <property type="term" value="F:organic acid binding"/>
    <property type="evidence" value="ECO:0007669"/>
    <property type="project" value="TreeGrafter"/>
</dbReference>
<dbReference type="GO" id="GO:0019825">
    <property type="term" value="F:oxygen binding"/>
    <property type="evidence" value="ECO:0007669"/>
    <property type="project" value="InterPro"/>
</dbReference>
<dbReference type="GO" id="GO:0005344">
    <property type="term" value="F:oxygen carrier activity"/>
    <property type="evidence" value="ECO:0007669"/>
    <property type="project" value="UniProtKB-KW"/>
</dbReference>
<dbReference type="GO" id="GO:0004601">
    <property type="term" value="F:peroxidase activity"/>
    <property type="evidence" value="ECO:0007669"/>
    <property type="project" value="TreeGrafter"/>
</dbReference>
<dbReference type="GO" id="GO:0042744">
    <property type="term" value="P:hydrogen peroxide catabolic process"/>
    <property type="evidence" value="ECO:0007669"/>
    <property type="project" value="TreeGrafter"/>
</dbReference>
<dbReference type="CDD" id="cd08927">
    <property type="entry name" value="Hb-alpha-like"/>
    <property type="match status" value="1"/>
</dbReference>
<dbReference type="FunFam" id="1.10.490.10:FF:000002">
    <property type="entry name" value="Hemoglobin subunit alpha"/>
    <property type="match status" value="1"/>
</dbReference>
<dbReference type="Gene3D" id="1.10.490.10">
    <property type="entry name" value="Globins"/>
    <property type="match status" value="1"/>
</dbReference>
<dbReference type="InterPro" id="IPR000971">
    <property type="entry name" value="Globin"/>
</dbReference>
<dbReference type="InterPro" id="IPR009050">
    <property type="entry name" value="Globin-like_sf"/>
</dbReference>
<dbReference type="InterPro" id="IPR012292">
    <property type="entry name" value="Globin/Proto"/>
</dbReference>
<dbReference type="InterPro" id="IPR002338">
    <property type="entry name" value="Hemoglobin_a-typ"/>
</dbReference>
<dbReference type="InterPro" id="IPR050056">
    <property type="entry name" value="Hemoglobin_oxygen_transport"/>
</dbReference>
<dbReference type="PANTHER" id="PTHR11442">
    <property type="entry name" value="HEMOGLOBIN FAMILY MEMBER"/>
    <property type="match status" value="1"/>
</dbReference>
<dbReference type="PANTHER" id="PTHR11442:SF48">
    <property type="entry name" value="HEMOGLOBIN SUBUNIT ALPHA"/>
    <property type="match status" value="1"/>
</dbReference>
<dbReference type="Pfam" id="PF00042">
    <property type="entry name" value="Globin"/>
    <property type="match status" value="1"/>
</dbReference>
<dbReference type="PRINTS" id="PR00612">
    <property type="entry name" value="ALPHAHAEM"/>
</dbReference>
<dbReference type="SUPFAM" id="SSF46458">
    <property type="entry name" value="Globin-like"/>
    <property type="match status" value="1"/>
</dbReference>
<dbReference type="PROSITE" id="PS01033">
    <property type="entry name" value="GLOBIN"/>
    <property type="match status" value="1"/>
</dbReference>
<protein>
    <recommendedName>
        <fullName>Hemoglobin subunit alpha</fullName>
    </recommendedName>
    <alternativeName>
        <fullName>Alpha-globin</fullName>
    </alternativeName>
    <alternativeName>
        <fullName>Hemoglobin alpha chain</fullName>
    </alternativeName>
    <component>
        <recommendedName>
            <fullName evidence="2">Hemopressin</fullName>
        </recommendedName>
    </component>
</protein>
<gene>
    <name type="primary">HBA</name>
</gene>
<reference key="1">
    <citation type="journal article" date="1989" name="Biol. Chem. Hoppe-Seyler">
        <title>Carnivora: the amino-acid sequence of the adult Sumatran tiger (Panthera tigris sumatrae) hemoglobins.</title>
        <authorList>
            <person name="Jahan M.J."/>
            <person name="Ahmed A."/>
            <person name="Braunitzer G."/>
            <person name="Goltenboth R."/>
        </authorList>
    </citation>
    <scope>PROTEIN SEQUENCE</scope>
</reference>
<comment type="function">
    <text>Involved in oxygen transport from the lung to the various peripheral tissues.</text>
</comment>
<comment type="function">
    <molecule>Hemopressin</molecule>
    <text evidence="2">Hemopressin acts as an antagonist peptide of the cannabinoid receptor CNR1. Hemopressin-binding efficiently blocks cannabinoid receptor CNR1 and subsequent signaling.</text>
</comment>
<comment type="subunit">
    <text>Heterotetramer of two alpha chains and two beta chains.</text>
</comment>
<comment type="tissue specificity">
    <text>Red blood cells.</text>
</comment>
<comment type="similarity">
    <text evidence="4">Belongs to the globin family.</text>
</comment>
<sequence>VLSSADKNNVKACWGKIGSHAGEYGAEALERTFCSFPTTKTYFPHFDLSHGSAQVQTHGQKVADALTKAVAHINNLPNALSDLSDLHAYKLRVDPVNFKFLSHCLLVTLACHHPEEFTPAVHASLDKFFSAVSTVLTSKYR</sequence>
<feature type="chain" id="PRO_0000052722" description="Hemoglobin subunit alpha">
    <location>
        <begin position="1"/>
        <end position="141"/>
    </location>
</feature>
<feature type="peptide" id="PRO_0000455921" description="Hemopressin" evidence="2">
    <location>
        <begin position="95"/>
        <end position="103"/>
    </location>
</feature>
<feature type="domain" description="Globin" evidence="4">
    <location>
        <begin position="1"/>
        <end position="141"/>
    </location>
</feature>
<feature type="binding site" evidence="4">
    <location>
        <position position="58"/>
    </location>
    <ligand>
        <name>O2</name>
        <dbReference type="ChEBI" id="CHEBI:15379"/>
    </ligand>
</feature>
<feature type="binding site" description="proximal binding residue" evidence="4">
    <location>
        <position position="87"/>
    </location>
    <ligand>
        <name>heme b</name>
        <dbReference type="ChEBI" id="CHEBI:60344"/>
    </ligand>
    <ligandPart>
        <name>Fe</name>
        <dbReference type="ChEBI" id="CHEBI:18248"/>
    </ligandPart>
</feature>
<feature type="modified residue" description="Phosphoserine" evidence="3">
    <location>
        <position position="3"/>
    </location>
</feature>
<feature type="modified residue" description="N6-succinyllysine" evidence="1">
    <location>
        <position position="7"/>
    </location>
</feature>
<feature type="modified residue" description="N6-succinyllysine" evidence="1">
    <location>
        <position position="11"/>
    </location>
</feature>
<feature type="modified residue" description="N6-acetyllysine; alternate" evidence="3">
    <location>
        <position position="16"/>
    </location>
</feature>
<feature type="modified residue" description="N6-succinyllysine; alternate" evidence="1">
    <location>
        <position position="16"/>
    </location>
</feature>
<feature type="modified residue" description="Phosphotyrosine" evidence="3">
    <location>
        <position position="24"/>
    </location>
</feature>
<feature type="modified residue" description="Phosphoserine" evidence="3">
    <location>
        <position position="35"/>
    </location>
</feature>
<feature type="modified residue" description="N6-succinyllysine" evidence="1">
    <location>
        <position position="40"/>
    </location>
</feature>
<feature type="modified residue" description="Phosphoserine" evidence="3">
    <location>
        <position position="49"/>
    </location>
</feature>
<feature type="modified residue" description="Phosphoserine" evidence="1">
    <location>
        <position position="102"/>
    </location>
</feature>
<feature type="modified residue" description="Phosphothreonine" evidence="1">
    <location>
        <position position="108"/>
    </location>
</feature>
<feature type="modified residue" description="Phosphoserine" evidence="1">
    <location>
        <position position="124"/>
    </location>
</feature>
<feature type="modified residue" description="Phosphothreonine" evidence="1">
    <location>
        <position position="134"/>
    </location>
</feature>
<feature type="modified residue" description="Phosphothreonine" evidence="1">
    <location>
        <position position="137"/>
    </location>
</feature>
<feature type="modified residue" description="Phosphoserine" evidence="1">
    <location>
        <position position="138"/>
    </location>
</feature>
<evidence type="ECO:0000250" key="1">
    <source>
        <dbReference type="UniProtKB" id="P01942"/>
    </source>
</evidence>
<evidence type="ECO:0000250" key="2">
    <source>
        <dbReference type="UniProtKB" id="P01946"/>
    </source>
</evidence>
<evidence type="ECO:0000250" key="3">
    <source>
        <dbReference type="UniProtKB" id="P69905"/>
    </source>
</evidence>
<evidence type="ECO:0000255" key="4">
    <source>
        <dbReference type="PROSITE-ProRule" id="PRU00238"/>
    </source>
</evidence>
<organism>
    <name type="scientific">Panthera tigris sumatrae</name>
    <name type="common">Sumatran tiger</name>
    <name type="synonym">Panthera sumatrae</name>
    <dbReference type="NCBI Taxonomy" id="9695"/>
    <lineage>
        <taxon>Eukaryota</taxon>
        <taxon>Metazoa</taxon>
        <taxon>Chordata</taxon>
        <taxon>Craniata</taxon>
        <taxon>Vertebrata</taxon>
        <taxon>Euteleostomi</taxon>
        <taxon>Mammalia</taxon>
        <taxon>Eutheria</taxon>
        <taxon>Laurasiatheria</taxon>
        <taxon>Carnivora</taxon>
        <taxon>Feliformia</taxon>
        <taxon>Felidae</taxon>
        <taxon>Pantherinae</taxon>
        <taxon>Panthera</taxon>
    </lineage>
</organism>
<accession>P10883</accession>
<keyword id="KW-0007">Acetylation</keyword>
<keyword id="KW-0903">Direct protein sequencing</keyword>
<keyword id="KW-0349">Heme</keyword>
<keyword id="KW-0408">Iron</keyword>
<keyword id="KW-0479">Metal-binding</keyword>
<keyword id="KW-0561">Oxygen transport</keyword>
<keyword id="KW-0597">Phosphoprotein</keyword>
<keyword id="KW-0813">Transport</keyword>
<name>HBA_PANTS</name>
<proteinExistence type="evidence at protein level"/>